<accession>B5R369</accession>
<proteinExistence type="inferred from homology"/>
<dbReference type="EC" id="3.1.1.85" evidence="2"/>
<dbReference type="EMBL" id="AM933172">
    <property type="protein sequence ID" value="CAR34910.1"/>
    <property type="molecule type" value="Genomic_DNA"/>
</dbReference>
<dbReference type="RefSeq" id="WP_000998145.1">
    <property type="nucleotide sequence ID" value="NC_011294.1"/>
</dbReference>
<dbReference type="SMR" id="B5R369"/>
<dbReference type="ESTHER" id="salty-BIOH">
    <property type="family name" value="BioH"/>
</dbReference>
<dbReference type="KEGG" id="set:SEN3335"/>
<dbReference type="HOGENOM" id="CLU_020336_12_2_6"/>
<dbReference type="UniPathway" id="UPA00078"/>
<dbReference type="Proteomes" id="UP000000613">
    <property type="component" value="Chromosome"/>
</dbReference>
<dbReference type="GO" id="GO:0005737">
    <property type="term" value="C:cytoplasm"/>
    <property type="evidence" value="ECO:0007669"/>
    <property type="project" value="UniProtKB-SubCell"/>
</dbReference>
<dbReference type="GO" id="GO:0090499">
    <property type="term" value="F:pimelyl-[acyl-carrier protein] methyl ester esterase activity"/>
    <property type="evidence" value="ECO:0007669"/>
    <property type="project" value="UniProtKB-EC"/>
</dbReference>
<dbReference type="GO" id="GO:0009102">
    <property type="term" value="P:biotin biosynthetic process"/>
    <property type="evidence" value="ECO:0007669"/>
    <property type="project" value="UniProtKB-UniRule"/>
</dbReference>
<dbReference type="FunFam" id="3.40.50.1820:FF:000045">
    <property type="entry name" value="Pimeloyl-[acyl-carrier protein] methyl ester esterase"/>
    <property type="match status" value="1"/>
</dbReference>
<dbReference type="Gene3D" id="3.40.50.1820">
    <property type="entry name" value="alpha/beta hydrolase"/>
    <property type="match status" value="1"/>
</dbReference>
<dbReference type="HAMAP" id="MF_01260">
    <property type="entry name" value="Carboxylester"/>
    <property type="match status" value="1"/>
</dbReference>
<dbReference type="InterPro" id="IPR000073">
    <property type="entry name" value="AB_hydrolase_1"/>
</dbReference>
<dbReference type="InterPro" id="IPR029058">
    <property type="entry name" value="AB_hydrolase_fold"/>
</dbReference>
<dbReference type="InterPro" id="IPR010076">
    <property type="entry name" value="BioH"/>
</dbReference>
<dbReference type="InterPro" id="IPR050228">
    <property type="entry name" value="Carboxylesterase_BioH"/>
</dbReference>
<dbReference type="NCBIfam" id="TIGR01738">
    <property type="entry name" value="bioH"/>
    <property type="match status" value="1"/>
</dbReference>
<dbReference type="NCBIfam" id="NF007674">
    <property type="entry name" value="PRK10349.1"/>
    <property type="match status" value="1"/>
</dbReference>
<dbReference type="PANTHER" id="PTHR43194">
    <property type="entry name" value="HYDROLASE ALPHA/BETA FOLD FAMILY"/>
    <property type="match status" value="1"/>
</dbReference>
<dbReference type="PANTHER" id="PTHR43194:SF5">
    <property type="entry name" value="PIMELOYL-[ACYL-CARRIER PROTEIN] METHYL ESTER ESTERASE"/>
    <property type="match status" value="1"/>
</dbReference>
<dbReference type="Pfam" id="PF00561">
    <property type="entry name" value="Abhydrolase_1"/>
    <property type="match status" value="1"/>
</dbReference>
<dbReference type="SUPFAM" id="SSF53474">
    <property type="entry name" value="alpha/beta-Hydrolases"/>
    <property type="match status" value="1"/>
</dbReference>
<organism>
    <name type="scientific">Salmonella enteritidis PT4 (strain P125109)</name>
    <dbReference type="NCBI Taxonomy" id="550537"/>
    <lineage>
        <taxon>Bacteria</taxon>
        <taxon>Pseudomonadati</taxon>
        <taxon>Pseudomonadota</taxon>
        <taxon>Gammaproteobacteria</taxon>
        <taxon>Enterobacterales</taxon>
        <taxon>Enterobacteriaceae</taxon>
        <taxon>Salmonella</taxon>
    </lineage>
</organism>
<comment type="function">
    <text evidence="2">The physiological role of BioH is to remove the methyl group introduced by BioC when the pimeloyl moiety is complete. It allows to synthesize pimeloyl-ACP via the fatty acid synthetic pathway through the hydrolysis of the ester bonds of pimeloyl-ACP esters.</text>
</comment>
<comment type="catalytic activity">
    <reaction evidence="2">
        <text>6-carboxyhexanoyl-[ACP] methyl ester + H2O = 6-carboxyhexanoyl-[ACP] + methanol + H(+)</text>
        <dbReference type="Rhea" id="RHEA:42700"/>
        <dbReference type="Rhea" id="RHEA-COMP:9955"/>
        <dbReference type="Rhea" id="RHEA-COMP:10186"/>
        <dbReference type="ChEBI" id="CHEBI:15377"/>
        <dbReference type="ChEBI" id="CHEBI:15378"/>
        <dbReference type="ChEBI" id="CHEBI:17790"/>
        <dbReference type="ChEBI" id="CHEBI:78846"/>
        <dbReference type="ChEBI" id="CHEBI:82735"/>
        <dbReference type="EC" id="3.1.1.85"/>
    </reaction>
</comment>
<comment type="pathway">
    <text evidence="2">Cofactor biosynthesis; biotin biosynthesis.</text>
</comment>
<comment type="subunit">
    <text evidence="2">Monomer.</text>
</comment>
<comment type="subcellular location">
    <subcellularLocation>
        <location evidence="2">Cytoplasm</location>
    </subcellularLocation>
</comment>
<comment type="similarity">
    <text evidence="2">Belongs to the AB hydrolase superfamily. Carboxylesterase BioH family.</text>
</comment>
<feature type="chain" id="PRO_1000139999" description="Pimeloyl-[acyl-carrier protein] methyl ester esterase">
    <location>
        <begin position="1"/>
        <end position="256"/>
    </location>
</feature>
<feature type="domain" description="AB hydrolase-1" evidence="1">
    <location>
        <begin position="15"/>
        <end position="242"/>
    </location>
</feature>
<feature type="active site" description="Nucleophile" evidence="2">
    <location>
        <position position="82"/>
    </location>
</feature>
<feature type="active site" evidence="2">
    <location>
        <position position="207"/>
    </location>
</feature>
<feature type="active site" evidence="2">
    <location>
        <position position="235"/>
    </location>
</feature>
<feature type="binding site" evidence="2">
    <location>
        <position position="22"/>
    </location>
    <ligand>
        <name>substrate</name>
    </ligand>
</feature>
<feature type="binding site" evidence="2">
    <location>
        <begin position="82"/>
        <end position="83"/>
    </location>
    <ligand>
        <name>substrate</name>
    </ligand>
</feature>
<feature type="binding site" evidence="2">
    <location>
        <begin position="143"/>
        <end position="147"/>
    </location>
    <ligand>
        <name>substrate</name>
    </ligand>
</feature>
<feature type="binding site" evidence="2">
    <location>
        <position position="235"/>
    </location>
    <ligand>
        <name>substrate</name>
    </ligand>
</feature>
<sequence length="256" mass="28241">MNDIWWQTYGEGNCHLVLLHGWGLNAEVWHCIREELGSHFTLHLVDLPGYGRSSGFGAMTLEEMTAQVAKNAPDQAIWLGWSLGGLVASQMALTHPERVQALVTVASSPCFSAREGWPGIKPEILGGFQQQLSDDFQRTVERFLALQTLGTETARQDARTLKSVVLAQPMPDVEVLNGGLEILKTVDLREALKNVNMPFLRLYGYLDGLVPRKIAPLLDTLWPHSTSQIMAKAAHAPFISHPAAFCQALMTLKSSL</sequence>
<evidence type="ECO:0000255" key="1"/>
<evidence type="ECO:0000255" key="2">
    <source>
        <dbReference type="HAMAP-Rule" id="MF_01260"/>
    </source>
</evidence>
<name>BIOH_SALEP</name>
<keyword id="KW-0093">Biotin biosynthesis</keyword>
<keyword id="KW-0963">Cytoplasm</keyword>
<keyword id="KW-0378">Hydrolase</keyword>
<keyword id="KW-0719">Serine esterase</keyword>
<gene>
    <name evidence="2" type="primary">bioH</name>
    <name type="ordered locus">SEN3335</name>
</gene>
<protein>
    <recommendedName>
        <fullName evidence="2">Pimeloyl-[acyl-carrier protein] methyl ester esterase</fullName>
        <ecNumber evidence="2">3.1.1.85</ecNumber>
    </recommendedName>
    <alternativeName>
        <fullName evidence="2">Biotin synthesis protein BioH</fullName>
    </alternativeName>
    <alternativeName>
        <fullName evidence="2">Carboxylesterase BioH</fullName>
    </alternativeName>
</protein>
<reference key="1">
    <citation type="journal article" date="2008" name="Genome Res.">
        <title>Comparative genome analysis of Salmonella enteritidis PT4 and Salmonella gallinarum 287/91 provides insights into evolutionary and host adaptation pathways.</title>
        <authorList>
            <person name="Thomson N.R."/>
            <person name="Clayton D.J."/>
            <person name="Windhorst D."/>
            <person name="Vernikos G."/>
            <person name="Davidson S."/>
            <person name="Churcher C."/>
            <person name="Quail M.A."/>
            <person name="Stevens M."/>
            <person name="Jones M.A."/>
            <person name="Watson M."/>
            <person name="Barron A."/>
            <person name="Layton A."/>
            <person name="Pickard D."/>
            <person name="Kingsley R.A."/>
            <person name="Bignell A."/>
            <person name="Clark L."/>
            <person name="Harris B."/>
            <person name="Ormond D."/>
            <person name="Abdellah Z."/>
            <person name="Brooks K."/>
            <person name="Cherevach I."/>
            <person name="Chillingworth T."/>
            <person name="Woodward J."/>
            <person name="Norberczak H."/>
            <person name="Lord A."/>
            <person name="Arrowsmith C."/>
            <person name="Jagels K."/>
            <person name="Moule S."/>
            <person name="Mungall K."/>
            <person name="Saunders M."/>
            <person name="Whitehead S."/>
            <person name="Chabalgoity J.A."/>
            <person name="Maskell D."/>
            <person name="Humphreys T."/>
            <person name="Roberts M."/>
            <person name="Barrow P.A."/>
            <person name="Dougan G."/>
            <person name="Parkhill J."/>
        </authorList>
    </citation>
    <scope>NUCLEOTIDE SEQUENCE [LARGE SCALE GENOMIC DNA]</scope>
    <source>
        <strain>P125109</strain>
    </source>
</reference>